<evidence type="ECO:0000250" key="1"/>
<evidence type="ECO:0000255" key="2">
    <source>
        <dbReference type="PROSITE-ProRule" id="PRU00541"/>
    </source>
</evidence>
<evidence type="ECO:0000255" key="3">
    <source>
        <dbReference type="PROSITE-ProRule" id="PRU00542"/>
    </source>
</evidence>
<evidence type="ECO:0000256" key="4">
    <source>
        <dbReference type="SAM" id="MobiDB-lite"/>
    </source>
</evidence>
<evidence type="ECO:0000305" key="5"/>
<sequence>MSNQNDGWGETATETSAPAPPPASAPVSSSNNDGWGEPAPSAPADNGWADAGASNGGSGANNNDGWFDAPVPPSSQPPKKEASDIQLQDDTEGLITNTFQVEVKLADLQGDPNSPLYSVQSFKELNLHEDLMKGIIAAGFQKPSKIQEKALPLLLSNPPRNLIGQSQSGTGKTAAFTLNMLSRVDPTIPTPQAICIAPSRELARQIQEVIDQIGQFTQVGTFLAIPGSWSRNSRIDKQILIGTPGTLVDMLMRGSRILDPRMIRVLVLDEADELIAQQGLGEQTFRIKQLLPPNVQNVLFSATFNDDVQEFADRFAPEANKIFLRKEDITVDAIRQLYLECDSEDQKYEALSALYDCLVIGQSIVFCKRKVTADHIAERLISEGHAVASLHGDKLSQERDAILDGFRNGETKVLITTNVIARGIDIPAVNMVVNYDVPDLGPGGNGPDIETYIHRIGRTGRFGRKGCSVIFTHDYRSKSDVERIMNTLGKPMKKIDARSTTDIEQLEKALKLAMKGPA</sequence>
<reference key="1">
    <citation type="journal article" date="2005" name="Science">
        <title>The genome of the basidiomycetous yeast and human pathogen Cryptococcus neoformans.</title>
        <authorList>
            <person name="Loftus B.J."/>
            <person name="Fung E."/>
            <person name="Roncaglia P."/>
            <person name="Rowley D."/>
            <person name="Amedeo P."/>
            <person name="Bruno D."/>
            <person name="Vamathevan J."/>
            <person name="Miranda M."/>
            <person name="Anderson I.J."/>
            <person name="Fraser J.A."/>
            <person name="Allen J.E."/>
            <person name="Bosdet I.E."/>
            <person name="Brent M.R."/>
            <person name="Chiu R."/>
            <person name="Doering T.L."/>
            <person name="Donlin M.J."/>
            <person name="D'Souza C.A."/>
            <person name="Fox D.S."/>
            <person name="Grinberg V."/>
            <person name="Fu J."/>
            <person name="Fukushima M."/>
            <person name="Haas B.J."/>
            <person name="Huang J.C."/>
            <person name="Janbon G."/>
            <person name="Jones S.J.M."/>
            <person name="Koo H.L."/>
            <person name="Krzywinski M.I."/>
            <person name="Kwon-Chung K.J."/>
            <person name="Lengeler K.B."/>
            <person name="Maiti R."/>
            <person name="Marra M.A."/>
            <person name="Marra R.E."/>
            <person name="Mathewson C.A."/>
            <person name="Mitchell T.G."/>
            <person name="Pertea M."/>
            <person name="Riggs F.R."/>
            <person name="Salzberg S.L."/>
            <person name="Schein J.E."/>
            <person name="Shvartsbeyn A."/>
            <person name="Shin H."/>
            <person name="Shumway M."/>
            <person name="Specht C.A."/>
            <person name="Suh B.B."/>
            <person name="Tenney A."/>
            <person name="Utterback T.R."/>
            <person name="Wickes B.L."/>
            <person name="Wortman J.R."/>
            <person name="Wye N.H."/>
            <person name="Kronstad J.W."/>
            <person name="Lodge J.K."/>
            <person name="Heitman J."/>
            <person name="Davis R.W."/>
            <person name="Fraser C.M."/>
            <person name="Hyman R.W."/>
        </authorList>
    </citation>
    <scope>NUCLEOTIDE SEQUENCE [LARGE SCALE GENOMIC DNA]</scope>
    <source>
        <strain>JEC21 / ATCC MYA-565</strain>
    </source>
</reference>
<feature type="chain" id="PRO_0000232221" description="ATP-dependent RNA helicase DBP5">
    <location>
        <begin position="1"/>
        <end position="518"/>
    </location>
</feature>
<feature type="domain" description="Helicase ATP-binding" evidence="2">
    <location>
        <begin position="153"/>
        <end position="322"/>
    </location>
</feature>
<feature type="domain" description="Helicase C-terminal" evidence="3">
    <location>
        <begin position="333"/>
        <end position="503"/>
    </location>
</feature>
<feature type="region of interest" description="Disordered" evidence="4">
    <location>
        <begin position="1"/>
        <end position="85"/>
    </location>
</feature>
<feature type="short sequence motif" description="Q motif">
    <location>
        <begin position="120"/>
        <end position="148"/>
    </location>
</feature>
<feature type="short sequence motif" description="DEAD box">
    <location>
        <begin position="269"/>
        <end position="272"/>
    </location>
</feature>
<feature type="compositionally biased region" description="Low complexity" evidence="4">
    <location>
        <begin position="44"/>
        <end position="53"/>
    </location>
</feature>
<feature type="binding site" evidence="2">
    <location>
        <begin position="166"/>
        <end position="173"/>
    </location>
    <ligand>
        <name>ATP</name>
        <dbReference type="ChEBI" id="CHEBI:30616"/>
    </ligand>
</feature>
<comment type="function">
    <text evidence="1">ATP-dependent RNA helicase associated with the nuclear pore complex and essential for mRNA export from the nucleus. May participate in a terminal step of mRNA export through the removal of proteins that accompany mRNA through the nucleopore complex. May also be involved in early transcription (By similarity).</text>
</comment>
<comment type="catalytic activity">
    <reaction>
        <text>ATP + H2O = ADP + phosphate + H(+)</text>
        <dbReference type="Rhea" id="RHEA:13065"/>
        <dbReference type="ChEBI" id="CHEBI:15377"/>
        <dbReference type="ChEBI" id="CHEBI:15378"/>
        <dbReference type="ChEBI" id="CHEBI:30616"/>
        <dbReference type="ChEBI" id="CHEBI:43474"/>
        <dbReference type="ChEBI" id="CHEBI:456216"/>
        <dbReference type="EC" id="3.6.4.13"/>
    </reaction>
</comment>
<comment type="subunit">
    <text evidence="1">Associates with the nuclear pore complex.</text>
</comment>
<comment type="subcellular location">
    <subcellularLocation>
        <location evidence="1">Cytoplasm</location>
    </subcellularLocation>
    <subcellularLocation>
        <location>Nucleus</location>
        <location>Nuclear pore complex</location>
    </subcellularLocation>
    <subcellularLocation>
        <location evidence="1">Nucleus membrane</location>
        <topology evidence="1">Peripheral membrane protein</topology>
        <orientation evidence="1">Cytoplasmic side</orientation>
    </subcellularLocation>
    <text evidence="1">Nuclear pore complex cytoplasmic fibrils.</text>
</comment>
<comment type="domain">
    <text>The Q motif is unique to and characteristic of the DEAD box family of RNA helicases and controls ATP binding and hydrolysis.</text>
</comment>
<comment type="similarity">
    <text evidence="5">Belongs to the DEAD box helicase family. DDX19/DBP5 subfamily.</text>
</comment>
<comment type="sequence caution" evidence="5">
    <conflict type="erroneous initiation">
        <sequence resource="EMBL-CDS" id="AAW45355"/>
    </conflict>
    <text>Extended N-terminus.</text>
</comment>
<gene>
    <name type="primary">DBP5</name>
    <name type="ordered locus">CNI01880</name>
</gene>
<accession>P0CQ86</accession>
<accession>Q55NB1</accession>
<accession>Q5KBP4</accession>
<accession>Q5KBP5</accession>
<keyword id="KW-0067">ATP-binding</keyword>
<keyword id="KW-0963">Cytoplasm</keyword>
<keyword id="KW-0347">Helicase</keyword>
<keyword id="KW-0378">Hydrolase</keyword>
<keyword id="KW-0472">Membrane</keyword>
<keyword id="KW-0509">mRNA transport</keyword>
<keyword id="KW-0906">Nuclear pore complex</keyword>
<keyword id="KW-0547">Nucleotide-binding</keyword>
<keyword id="KW-0539">Nucleus</keyword>
<keyword id="KW-0653">Protein transport</keyword>
<keyword id="KW-1185">Reference proteome</keyword>
<keyword id="KW-0694">RNA-binding</keyword>
<keyword id="KW-0811">Translocation</keyword>
<keyword id="KW-0813">Transport</keyword>
<proteinExistence type="inferred from homology"/>
<organism>
    <name type="scientific">Cryptococcus neoformans var. neoformans serotype D (strain JEC21 / ATCC MYA-565)</name>
    <name type="common">Filobasidiella neoformans</name>
    <dbReference type="NCBI Taxonomy" id="214684"/>
    <lineage>
        <taxon>Eukaryota</taxon>
        <taxon>Fungi</taxon>
        <taxon>Dikarya</taxon>
        <taxon>Basidiomycota</taxon>
        <taxon>Agaricomycotina</taxon>
        <taxon>Tremellomycetes</taxon>
        <taxon>Tremellales</taxon>
        <taxon>Cryptococcaceae</taxon>
        <taxon>Cryptococcus</taxon>
        <taxon>Cryptococcus neoformans species complex</taxon>
    </lineage>
</organism>
<protein>
    <recommendedName>
        <fullName>ATP-dependent RNA helicase DBP5</fullName>
        <ecNumber>3.6.4.13</ecNumber>
    </recommendedName>
</protein>
<name>DBP5_CRYNJ</name>
<dbReference type="EC" id="3.6.4.13"/>
<dbReference type="EMBL" id="AE017349">
    <property type="protein sequence ID" value="AAW45356.2"/>
    <property type="molecule type" value="Genomic_DNA"/>
</dbReference>
<dbReference type="EMBL" id="AE017349">
    <property type="protein sequence ID" value="AAW45355.1"/>
    <property type="status" value="ALT_INIT"/>
    <property type="molecule type" value="Genomic_DNA"/>
</dbReference>
<dbReference type="RefSeq" id="XP_572662.1">
    <property type="nucleotide sequence ID" value="XM_572662.1"/>
</dbReference>
<dbReference type="RefSeq" id="XP_572663.1">
    <property type="nucleotide sequence ID" value="XM_572663.1"/>
</dbReference>
<dbReference type="SMR" id="P0CQ86"/>
<dbReference type="FunCoup" id="P0CQ86">
    <property type="interactions" value="341"/>
</dbReference>
<dbReference type="STRING" id="214684.P0CQ86"/>
<dbReference type="PaxDb" id="214684-P0CQ86"/>
<dbReference type="GeneID" id="3259615"/>
<dbReference type="KEGG" id="cne:CNI01880"/>
<dbReference type="eggNOG" id="KOG0332">
    <property type="taxonomic scope" value="Eukaryota"/>
</dbReference>
<dbReference type="HOGENOM" id="CLU_003041_1_0_1"/>
<dbReference type="InParanoid" id="P0CQ86"/>
<dbReference type="OrthoDB" id="10265785at2759"/>
<dbReference type="Proteomes" id="UP000002149">
    <property type="component" value="Chromosome 9"/>
</dbReference>
<dbReference type="GO" id="GO:0005934">
    <property type="term" value="C:cellular bud tip"/>
    <property type="evidence" value="ECO:0007669"/>
    <property type="project" value="EnsemblFungi"/>
</dbReference>
<dbReference type="GO" id="GO:0010494">
    <property type="term" value="C:cytoplasmic stress granule"/>
    <property type="evidence" value="ECO:0000318"/>
    <property type="project" value="GO_Central"/>
</dbReference>
<dbReference type="GO" id="GO:0031965">
    <property type="term" value="C:nuclear membrane"/>
    <property type="evidence" value="ECO:0007669"/>
    <property type="project" value="UniProtKB-SubCell"/>
</dbReference>
<dbReference type="GO" id="GO:0044614">
    <property type="term" value="C:nuclear pore cytoplasmic filaments"/>
    <property type="evidence" value="ECO:0007669"/>
    <property type="project" value="EnsemblFungi"/>
</dbReference>
<dbReference type="GO" id="GO:0005634">
    <property type="term" value="C:nucleus"/>
    <property type="evidence" value="ECO:0000318"/>
    <property type="project" value="GO_Central"/>
</dbReference>
<dbReference type="GO" id="GO:0005524">
    <property type="term" value="F:ATP binding"/>
    <property type="evidence" value="ECO:0007669"/>
    <property type="project" value="UniProtKB-KW"/>
</dbReference>
<dbReference type="GO" id="GO:0016887">
    <property type="term" value="F:ATP hydrolysis activity"/>
    <property type="evidence" value="ECO:0007669"/>
    <property type="project" value="RHEA"/>
</dbReference>
<dbReference type="GO" id="GO:0000822">
    <property type="term" value="F:inositol hexakisphosphate binding"/>
    <property type="evidence" value="ECO:0007669"/>
    <property type="project" value="EnsemblFungi"/>
</dbReference>
<dbReference type="GO" id="GO:0003729">
    <property type="term" value="F:mRNA binding"/>
    <property type="evidence" value="ECO:0000318"/>
    <property type="project" value="GO_Central"/>
</dbReference>
<dbReference type="GO" id="GO:0003724">
    <property type="term" value="F:RNA helicase activity"/>
    <property type="evidence" value="ECO:0000318"/>
    <property type="project" value="GO_Central"/>
</dbReference>
<dbReference type="GO" id="GO:0016973">
    <property type="term" value="P:poly(A)+ mRNA export from nucleus"/>
    <property type="evidence" value="ECO:0000318"/>
    <property type="project" value="GO_Central"/>
</dbReference>
<dbReference type="GO" id="GO:0015031">
    <property type="term" value="P:protein transport"/>
    <property type="evidence" value="ECO:0007669"/>
    <property type="project" value="UniProtKB-KW"/>
</dbReference>
<dbReference type="GO" id="GO:0006415">
    <property type="term" value="P:translational termination"/>
    <property type="evidence" value="ECO:0007669"/>
    <property type="project" value="EnsemblFungi"/>
</dbReference>
<dbReference type="GO" id="GO:0006409">
    <property type="term" value="P:tRNA export from nucleus"/>
    <property type="evidence" value="ECO:0007669"/>
    <property type="project" value="EnsemblFungi"/>
</dbReference>
<dbReference type="CDD" id="cd17963">
    <property type="entry name" value="DEADc_DDX19_DDX25"/>
    <property type="match status" value="1"/>
</dbReference>
<dbReference type="CDD" id="cd18787">
    <property type="entry name" value="SF2_C_DEAD"/>
    <property type="match status" value="1"/>
</dbReference>
<dbReference type="FunFam" id="3.40.50.300:FF:000849">
    <property type="entry name" value="ATP-dependent RNA helicase DBP5"/>
    <property type="match status" value="1"/>
</dbReference>
<dbReference type="Gene3D" id="3.40.50.300">
    <property type="entry name" value="P-loop containing nucleotide triphosphate hydrolases"/>
    <property type="match status" value="2"/>
</dbReference>
<dbReference type="InterPro" id="IPR011545">
    <property type="entry name" value="DEAD/DEAH_box_helicase_dom"/>
</dbReference>
<dbReference type="InterPro" id="IPR014001">
    <property type="entry name" value="Helicase_ATP-bd"/>
</dbReference>
<dbReference type="InterPro" id="IPR001650">
    <property type="entry name" value="Helicase_C-like"/>
</dbReference>
<dbReference type="InterPro" id="IPR027417">
    <property type="entry name" value="P-loop_NTPase"/>
</dbReference>
<dbReference type="InterPro" id="IPR000629">
    <property type="entry name" value="RNA-helicase_DEAD-box_CS"/>
</dbReference>
<dbReference type="InterPro" id="IPR014014">
    <property type="entry name" value="RNA_helicase_DEAD_Q_motif"/>
</dbReference>
<dbReference type="PANTHER" id="PTHR47958">
    <property type="entry name" value="ATP-DEPENDENT RNA HELICASE DBP3"/>
    <property type="match status" value="1"/>
</dbReference>
<dbReference type="Pfam" id="PF00270">
    <property type="entry name" value="DEAD"/>
    <property type="match status" value="1"/>
</dbReference>
<dbReference type="Pfam" id="PF00271">
    <property type="entry name" value="Helicase_C"/>
    <property type="match status" value="1"/>
</dbReference>
<dbReference type="SMART" id="SM00487">
    <property type="entry name" value="DEXDc"/>
    <property type="match status" value="1"/>
</dbReference>
<dbReference type="SMART" id="SM00490">
    <property type="entry name" value="HELICc"/>
    <property type="match status" value="1"/>
</dbReference>
<dbReference type="SUPFAM" id="SSF52540">
    <property type="entry name" value="P-loop containing nucleoside triphosphate hydrolases"/>
    <property type="match status" value="1"/>
</dbReference>
<dbReference type="PROSITE" id="PS00039">
    <property type="entry name" value="DEAD_ATP_HELICASE"/>
    <property type="match status" value="1"/>
</dbReference>
<dbReference type="PROSITE" id="PS51192">
    <property type="entry name" value="HELICASE_ATP_BIND_1"/>
    <property type="match status" value="1"/>
</dbReference>
<dbReference type="PROSITE" id="PS51194">
    <property type="entry name" value="HELICASE_CTER"/>
    <property type="match status" value="1"/>
</dbReference>
<dbReference type="PROSITE" id="PS51195">
    <property type="entry name" value="Q_MOTIF"/>
    <property type="match status" value="1"/>
</dbReference>